<dbReference type="EC" id="2.1.3.2" evidence="1"/>
<dbReference type="EMBL" id="AE005672">
    <property type="protein sequence ID" value="AAK75381.1"/>
    <property type="molecule type" value="Genomic_DNA"/>
</dbReference>
<dbReference type="PIR" id="D95148">
    <property type="entry name" value="D95148"/>
</dbReference>
<dbReference type="RefSeq" id="WP_001293838.1">
    <property type="nucleotide sequence ID" value="NZ_CP155539.1"/>
</dbReference>
<dbReference type="SMR" id="Q97QE2"/>
<dbReference type="PaxDb" id="170187-SP_1277"/>
<dbReference type="EnsemblBacteria" id="AAK75381">
    <property type="protein sequence ID" value="AAK75381"/>
    <property type="gene ID" value="SP_1277"/>
</dbReference>
<dbReference type="KEGG" id="spn:SP_1277"/>
<dbReference type="eggNOG" id="COG0540">
    <property type="taxonomic scope" value="Bacteria"/>
</dbReference>
<dbReference type="PhylomeDB" id="Q97QE2"/>
<dbReference type="BioCyc" id="SPNE170187:G1FZB-1290-MONOMER"/>
<dbReference type="UniPathway" id="UPA00070">
    <property type="reaction ID" value="UER00116"/>
</dbReference>
<dbReference type="Proteomes" id="UP000000585">
    <property type="component" value="Chromosome"/>
</dbReference>
<dbReference type="GO" id="GO:0005829">
    <property type="term" value="C:cytosol"/>
    <property type="evidence" value="ECO:0007669"/>
    <property type="project" value="TreeGrafter"/>
</dbReference>
<dbReference type="GO" id="GO:0016597">
    <property type="term" value="F:amino acid binding"/>
    <property type="evidence" value="ECO:0007669"/>
    <property type="project" value="InterPro"/>
</dbReference>
<dbReference type="GO" id="GO:0004070">
    <property type="term" value="F:aspartate carbamoyltransferase activity"/>
    <property type="evidence" value="ECO:0007669"/>
    <property type="project" value="UniProtKB-UniRule"/>
</dbReference>
<dbReference type="GO" id="GO:0006207">
    <property type="term" value="P:'de novo' pyrimidine nucleobase biosynthetic process"/>
    <property type="evidence" value="ECO:0007669"/>
    <property type="project" value="InterPro"/>
</dbReference>
<dbReference type="GO" id="GO:0044205">
    <property type="term" value="P:'de novo' UMP biosynthetic process"/>
    <property type="evidence" value="ECO:0007669"/>
    <property type="project" value="UniProtKB-UniRule"/>
</dbReference>
<dbReference type="GO" id="GO:0006520">
    <property type="term" value="P:amino acid metabolic process"/>
    <property type="evidence" value="ECO:0007669"/>
    <property type="project" value="InterPro"/>
</dbReference>
<dbReference type="FunFam" id="3.40.50.1370:FF:000011">
    <property type="entry name" value="Aspartate carbamoyltransferase"/>
    <property type="match status" value="1"/>
</dbReference>
<dbReference type="Gene3D" id="3.40.50.1370">
    <property type="entry name" value="Aspartate/ornithine carbamoyltransferase"/>
    <property type="match status" value="2"/>
</dbReference>
<dbReference type="HAMAP" id="MF_00001">
    <property type="entry name" value="Asp_carb_tr"/>
    <property type="match status" value="1"/>
</dbReference>
<dbReference type="InterPro" id="IPR006132">
    <property type="entry name" value="Asp/Orn_carbamoyltranf_P-bd"/>
</dbReference>
<dbReference type="InterPro" id="IPR006130">
    <property type="entry name" value="Asp/Orn_carbamoylTrfase"/>
</dbReference>
<dbReference type="InterPro" id="IPR036901">
    <property type="entry name" value="Asp/Orn_carbamoylTrfase_sf"/>
</dbReference>
<dbReference type="InterPro" id="IPR002082">
    <property type="entry name" value="Asp_carbamoyltransf"/>
</dbReference>
<dbReference type="InterPro" id="IPR006131">
    <property type="entry name" value="Asp_carbamoyltransf_Asp/Orn-bd"/>
</dbReference>
<dbReference type="NCBIfam" id="TIGR00670">
    <property type="entry name" value="asp_carb_tr"/>
    <property type="match status" value="1"/>
</dbReference>
<dbReference type="NCBIfam" id="NF002032">
    <property type="entry name" value="PRK00856.1"/>
    <property type="match status" value="1"/>
</dbReference>
<dbReference type="PANTHER" id="PTHR45753:SF6">
    <property type="entry name" value="ASPARTATE CARBAMOYLTRANSFERASE"/>
    <property type="match status" value="1"/>
</dbReference>
<dbReference type="PANTHER" id="PTHR45753">
    <property type="entry name" value="ORNITHINE CARBAMOYLTRANSFERASE, MITOCHONDRIAL"/>
    <property type="match status" value="1"/>
</dbReference>
<dbReference type="Pfam" id="PF00185">
    <property type="entry name" value="OTCace"/>
    <property type="match status" value="1"/>
</dbReference>
<dbReference type="Pfam" id="PF02729">
    <property type="entry name" value="OTCace_N"/>
    <property type="match status" value="1"/>
</dbReference>
<dbReference type="PRINTS" id="PR00100">
    <property type="entry name" value="AOTCASE"/>
</dbReference>
<dbReference type="PRINTS" id="PR00101">
    <property type="entry name" value="ATCASE"/>
</dbReference>
<dbReference type="SUPFAM" id="SSF53671">
    <property type="entry name" value="Aspartate/ornithine carbamoyltransferase"/>
    <property type="match status" value="1"/>
</dbReference>
<dbReference type="PROSITE" id="PS00097">
    <property type="entry name" value="CARBAMOYLTRANSFERASE"/>
    <property type="match status" value="1"/>
</dbReference>
<name>PYRB_STRPN</name>
<proteinExistence type="inferred from homology"/>
<keyword id="KW-0665">Pyrimidine biosynthesis</keyword>
<keyword id="KW-1185">Reference proteome</keyword>
<keyword id="KW-0808">Transferase</keyword>
<feature type="chain" id="PRO_0000113206" description="Aspartate carbamoyltransferase catalytic subunit">
    <location>
        <begin position="1"/>
        <end position="307"/>
    </location>
</feature>
<feature type="binding site" evidence="1">
    <location>
        <position position="56"/>
    </location>
    <ligand>
        <name>carbamoyl phosphate</name>
        <dbReference type="ChEBI" id="CHEBI:58228"/>
    </ligand>
</feature>
<feature type="binding site" evidence="1">
    <location>
        <position position="57"/>
    </location>
    <ligand>
        <name>carbamoyl phosphate</name>
        <dbReference type="ChEBI" id="CHEBI:58228"/>
    </ligand>
</feature>
<feature type="binding site" evidence="1">
    <location>
        <position position="84"/>
    </location>
    <ligand>
        <name>L-aspartate</name>
        <dbReference type="ChEBI" id="CHEBI:29991"/>
    </ligand>
</feature>
<feature type="binding site" evidence="1">
    <location>
        <position position="106"/>
    </location>
    <ligand>
        <name>carbamoyl phosphate</name>
        <dbReference type="ChEBI" id="CHEBI:58228"/>
    </ligand>
</feature>
<feature type="binding site" evidence="1">
    <location>
        <position position="136"/>
    </location>
    <ligand>
        <name>carbamoyl phosphate</name>
        <dbReference type="ChEBI" id="CHEBI:58228"/>
    </ligand>
</feature>
<feature type="binding site" evidence="1">
    <location>
        <position position="139"/>
    </location>
    <ligand>
        <name>carbamoyl phosphate</name>
        <dbReference type="ChEBI" id="CHEBI:58228"/>
    </ligand>
</feature>
<feature type="binding site" evidence="1">
    <location>
        <position position="169"/>
    </location>
    <ligand>
        <name>L-aspartate</name>
        <dbReference type="ChEBI" id="CHEBI:29991"/>
    </ligand>
</feature>
<feature type="binding site" evidence="1">
    <location>
        <position position="221"/>
    </location>
    <ligand>
        <name>L-aspartate</name>
        <dbReference type="ChEBI" id="CHEBI:29991"/>
    </ligand>
</feature>
<feature type="binding site" evidence="1">
    <location>
        <position position="262"/>
    </location>
    <ligand>
        <name>carbamoyl phosphate</name>
        <dbReference type="ChEBI" id="CHEBI:58228"/>
    </ligand>
</feature>
<feature type="binding site" evidence="1">
    <location>
        <position position="263"/>
    </location>
    <ligand>
        <name>carbamoyl phosphate</name>
        <dbReference type="ChEBI" id="CHEBI:58228"/>
    </ligand>
</feature>
<comment type="function">
    <text evidence="1">Catalyzes the condensation of carbamoyl phosphate and aspartate to form carbamoyl aspartate and inorganic phosphate, the committed step in the de novo pyrimidine nucleotide biosynthesis pathway.</text>
</comment>
<comment type="catalytic activity">
    <reaction evidence="1">
        <text>carbamoyl phosphate + L-aspartate = N-carbamoyl-L-aspartate + phosphate + H(+)</text>
        <dbReference type="Rhea" id="RHEA:20013"/>
        <dbReference type="ChEBI" id="CHEBI:15378"/>
        <dbReference type="ChEBI" id="CHEBI:29991"/>
        <dbReference type="ChEBI" id="CHEBI:32814"/>
        <dbReference type="ChEBI" id="CHEBI:43474"/>
        <dbReference type="ChEBI" id="CHEBI:58228"/>
        <dbReference type="EC" id="2.1.3.2"/>
    </reaction>
</comment>
<comment type="pathway">
    <text evidence="1">Pyrimidine metabolism; UMP biosynthesis via de novo pathway; (S)-dihydroorotate from bicarbonate: step 2/3.</text>
</comment>
<comment type="subunit">
    <text evidence="1">Heterododecamer (2C3:3R2) of six catalytic PyrB chains organized as two trimers (C3), and six regulatory PyrI chains organized as three dimers (R2).</text>
</comment>
<comment type="similarity">
    <text evidence="1">Belongs to the aspartate/ornithine carbamoyltransferase superfamily. ATCase family.</text>
</comment>
<reference key="1">
    <citation type="journal article" date="2001" name="Science">
        <title>Complete genome sequence of a virulent isolate of Streptococcus pneumoniae.</title>
        <authorList>
            <person name="Tettelin H."/>
            <person name="Nelson K.E."/>
            <person name="Paulsen I.T."/>
            <person name="Eisen J.A."/>
            <person name="Read T.D."/>
            <person name="Peterson S.N."/>
            <person name="Heidelberg J.F."/>
            <person name="DeBoy R.T."/>
            <person name="Haft D.H."/>
            <person name="Dodson R.J."/>
            <person name="Durkin A.S."/>
            <person name="Gwinn M.L."/>
            <person name="Kolonay J.F."/>
            <person name="Nelson W.C."/>
            <person name="Peterson J.D."/>
            <person name="Umayam L.A."/>
            <person name="White O."/>
            <person name="Salzberg S.L."/>
            <person name="Lewis M.R."/>
            <person name="Radune D."/>
            <person name="Holtzapple E.K."/>
            <person name="Khouri H.M."/>
            <person name="Wolf A.M."/>
            <person name="Utterback T.R."/>
            <person name="Hansen C.L."/>
            <person name="McDonald L.A."/>
            <person name="Feldblyum T.V."/>
            <person name="Angiuoli S.V."/>
            <person name="Dickinson T."/>
            <person name="Hickey E.K."/>
            <person name="Holt I.E."/>
            <person name="Loftus B.J."/>
            <person name="Yang F."/>
            <person name="Smith H.O."/>
            <person name="Venter J.C."/>
            <person name="Dougherty B.A."/>
            <person name="Morrison D.A."/>
            <person name="Hollingshead S.K."/>
            <person name="Fraser C.M."/>
        </authorList>
    </citation>
    <scope>NUCLEOTIDE SEQUENCE [LARGE SCALE GENOMIC DNA]</scope>
    <source>
        <strain>ATCC BAA-334 / TIGR4</strain>
    </source>
</reference>
<gene>
    <name evidence="1" type="primary">pyrB</name>
    <name type="ordered locus">SP_1277</name>
</gene>
<sequence length="307" mass="34690">MSENQQALNHVVSMEDLTVDQVMKLIKRGIEFKNGAQLPYEDHPIVSNLFFEDSTRTHKSFEVAEIKLGLERLDFDVKTSSVNKGETLYDTILTLSALGVDVCVIRHPEVDYYRELIASPTITTSIINGGDGSGQHPSQSLLDLMTIYEEFGHFEGLKVAIAGDLDHSRVAKSNMQILKRLGAELFFAGPEEWRSQEFADYGQFVTIDEIIDQVDVMMFLRVQHERHDSGAVFSKEDYHAQHGLTQERYDRLKETAILMHPAPINRDVEIADHLVEAPKSRIVQQMTNGVFVRMAILESVLASRNAN</sequence>
<protein>
    <recommendedName>
        <fullName evidence="1">Aspartate carbamoyltransferase catalytic subunit</fullName>
        <ecNumber evidence="1">2.1.3.2</ecNumber>
    </recommendedName>
    <alternativeName>
        <fullName evidence="1">Aspartate transcarbamylase</fullName>
        <shortName evidence="1">ATCase</shortName>
    </alternativeName>
</protein>
<organism>
    <name type="scientific">Streptococcus pneumoniae serotype 4 (strain ATCC BAA-334 / TIGR4)</name>
    <dbReference type="NCBI Taxonomy" id="170187"/>
    <lineage>
        <taxon>Bacteria</taxon>
        <taxon>Bacillati</taxon>
        <taxon>Bacillota</taxon>
        <taxon>Bacilli</taxon>
        <taxon>Lactobacillales</taxon>
        <taxon>Streptococcaceae</taxon>
        <taxon>Streptococcus</taxon>
    </lineage>
</organism>
<accession>Q97QE2</accession>
<evidence type="ECO:0000255" key="1">
    <source>
        <dbReference type="HAMAP-Rule" id="MF_00001"/>
    </source>
</evidence>